<sequence>MVYIIIVSHGHEDYIKKLLENLNADDEHYKIIVRDNKDSLLLKQICQHYAGLDYISGGVYGFGHNNNIAVAYVKEKYRPADDDYILFLNPDIIMKHDDLLTYIKYVESKRYAFSTLCLFRDEAKSLHDYSVRKFPVLSDFIVSFMLGINKTKIPKESIYSDTVVDWCAGSFMLVRFSDFVRVNGFDQGYFMYCEDIDLCLRLSLAGVRLHYVPAFHAIHYAHHDNRSFFSKAFRWHLKSTFRYLARKRILSNRNFDRISSVFHP</sequence>
<proteinExistence type="evidence at protein level"/>
<evidence type="ECO:0000269" key="1">
    <source>
    </source>
</evidence>
<evidence type="ECO:0000305" key="2"/>
<organism>
    <name type="scientific">Escherichia coli (strain K12)</name>
    <dbReference type="NCBI Taxonomy" id="83333"/>
    <lineage>
        <taxon>Bacteria</taxon>
        <taxon>Pseudomonadati</taxon>
        <taxon>Pseudomonadota</taxon>
        <taxon>Gammaproteobacteria</taxon>
        <taxon>Enterobacterales</taxon>
        <taxon>Enterobacteriaceae</taxon>
        <taxon>Escherichia</taxon>
    </lineage>
</organism>
<gene>
    <name type="primary">wbbL</name>
    <name type="ordered locus">b4571</name>
    <name type="ordered locus">JW2016</name>
    <name type="ORF">b2031</name>
</gene>
<keyword id="KW-0328">Glycosyltransferase</keyword>
<keyword id="KW-0448">Lipopolysaccharide biosynthesis</keyword>
<keyword id="KW-1185">Reference proteome</keyword>
<keyword id="KW-0808">Transferase</keyword>
<reference key="1">
    <citation type="journal article" date="1994" name="Microbiology">
        <title>Escherichia coli K12 regains its O antigen.</title>
        <authorList>
            <person name="Liu D."/>
            <person name="Reeves P.R."/>
        </authorList>
    </citation>
    <scope>NUCLEOTIDE SEQUENCE [GENOMIC DNA]</scope>
    <source>
        <strain>K12 / WG1</strain>
    </source>
</reference>
<reference key="2">
    <citation type="journal article" date="1996" name="DNA Res.">
        <title>A 460-kb DNA sequence of the Escherichia coli K-12 genome corresponding to the 40.1-50.0 min region on the linkage map.</title>
        <authorList>
            <person name="Itoh T."/>
            <person name="Aiba H."/>
            <person name="Baba T."/>
            <person name="Fujita K."/>
            <person name="Hayashi K."/>
            <person name="Inada T."/>
            <person name="Isono K."/>
            <person name="Kasai H."/>
            <person name="Kimura S."/>
            <person name="Kitakawa M."/>
            <person name="Kitagawa M."/>
            <person name="Makino K."/>
            <person name="Miki T."/>
            <person name="Mizobuchi K."/>
            <person name="Mori H."/>
            <person name="Mori T."/>
            <person name="Motomura K."/>
            <person name="Nakade S."/>
            <person name="Nakamura Y."/>
            <person name="Nashimoto H."/>
            <person name="Nishio Y."/>
            <person name="Oshima T."/>
            <person name="Saito N."/>
            <person name="Sampei G."/>
            <person name="Seki Y."/>
            <person name="Sivasundaram S."/>
            <person name="Tagami H."/>
            <person name="Takeda J."/>
            <person name="Takemoto K."/>
            <person name="Wada C."/>
            <person name="Yamamoto Y."/>
            <person name="Horiuchi T."/>
        </authorList>
    </citation>
    <scope>NUCLEOTIDE SEQUENCE [LARGE SCALE GENOMIC DNA]</scope>
    <source>
        <strain>K12 / W3110 / ATCC 27325 / DSM 5911</strain>
    </source>
</reference>
<reference key="3">
    <citation type="journal article" date="1997" name="Science">
        <title>The complete genome sequence of Escherichia coli K-12.</title>
        <authorList>
            <person name="Blattner F.R."/>
            <person name="Plunkett G. III"/>
            <person name="Bloch C.A."/>
            <person name="Perna N.T."/>
            <person name="Burland V."/>
            <person name="Riley M."/>
            <person name="Collado-Vides J."/>
            <person name="Glasner J.D."/>
            <person name="Rode C.K."/>
            <person name="Mayhew G.F."/>
            <person name="Gregor J."/>
            <person name="Davis N.W."/>
            <person name="Kirkpatrick H.A."/>
            <person name="Goeden M.A."/>
            <person name="Rose D.J."/>
            <person name="Mau B."/>
            <person name="Shao Y."/>
        </authorList>
    </citation>
    <scope>NUCLEOTIDE SEQUENCE [LARGE SCALE GENOMIC DNA]</scope>
    <source>
        <strain>K12 / MG1655 / ATCC 47076</strain>
    </source>
</reference>
<reference key="4">
    <citation type="journal article" date="2006" name="Mol. Syst. Biol.">
        <title>Highly accurate genome sequences of Escherichia coli K-12 strains MG1655 and W3110.</title>
        <authorList>
            <person name="Hayashi K."/>
            <person name="Morooka N."/>
            <person name="Yamamoto Y."/>
            <person name="Fujita K."/>
            <person name="Isono K."/>
            <person name="Choi S."/>
            <person name="Ohtsubo E."/>
            <person name="Baba T."/>
            <person name="Wanner B.L."/>
            <person name="Mori H."/>
            <person name="Horiuchi T."/>
        </authorList>
    </citation>
    <scope>NUCLEOTIDE SEQUENCE [LARGE SCALE GENOMIC DNA]</scope>
    <source>
        <strain>K12 / W3110 / ATCC 27325 / DSM 5911</strain>
    </source>
</reference>
<reference key="5">
    <citation type="journal article" date="1994" name="J. Bacteriol.">
        <title>Genetic analysis of the O-specific lipopolysaccharide biosynthesis region (rfb) of Escherichia coli K-12 W3110: identification of genes that confer group 6 specificity to Shigella flexneri serotypes Y and 4a.</title>
        <authorList>
            <person name="Yao Z."/>
            <person name="Valvano M.A."/>
        </authorList>
    </citation>
    <scope>NUCLEOTIDE SEQUENCE [GENOMIC DNA] OF 1-148</scope>
    <source>
        <strain>K12 / W3110 / ATCC 27325 / DSM 5911</strain>
    </source>
</reference>
<reference key="6">
    <citation type="journal article" date="1994" name="J. Bacteriol.">
        <title>Structure of the O antigen of Escherichia coli K-12 and the sequence of its rfb gene cluster.</title>
        <authorList>
            <person name="Stevenson G."/>
            <person name="Neal B."/>
            <person name="Liu D."/>
            <person name="Hobbs M."/>
            <person name="Packer N.H."/>
            <person name="Batley M."/>
            <person name="Redmond J.W."/>
            <person name="Lindquist L."/>
            <person name="Reeves P.R."/>
        </authorList>
    </citation>
    <scope>FUNCTION AS A RHAMNOSYLTRANSFERASE</scope>
</reference>
<dbReference type="EC" id="2.4.1.-"/>
<dbReference type="EMBL" id="L19537">
    <property type="protein sequence ID" value="AAB49382.1"/>
    <property type="molecule type" value="Genomic_DNA"/>
</dbReference>
<dbReference type="EMBL" id="U00096">
    <property type="status" value="NOT_ANNOTATED_CDS"/>
    <property type="molecule type" value="Genomic_DNA"/>
</dbReference>
<dbReference type="EMBL" id="AP009048">
    <property type="status" value="NOT_ANNOTATED_CDS"/>
    <property type="molecule type" value="Genomic_DNA"/>
</dbReference>
<dbReference type="EMBL" id="U03041">
    <property type="protein sequence ID" value="AAC31637.1"/>
    <property type="molecule type" value="Genomic_DNA"/>
</dbReference>
<dbReference type="PIR" id="I76769">
    <property type="entry name" value="I76769"/>
</dbReference>
<dbReference type="FunCoup" id="P36667">
    <property type="interactions" value="10"/>
</dbReference>
<dbReference type="IntAct" id="P36667">
    <property type="interactions" value="1"/>
</dbReference>
<dbReference type="CAZy" id="GT2">
    <property type="family name" value="Glycosyltransferase Family 2"/>
</dbReference>
<dbReference type="EchoBASE" id="EB1929"/>
<dbReference type="InParanoid" id="P36667"/>
<dbReference type="PhylomeDB" id="P36667"/>
<dbReference type="BRENDA" id="2.4.1.289">
    <property type="organism ID" value="2026"/>
</dbReference>
<dbReference type="UniPathway" id="UPA00030"/>
<dbReference type="PRO" id="PR:P36667"/>
<dbReference type="Proteomes" id="UP000000625">
    <property type="component" value="Chromosome"/>
</dbReference>
<dbReference type="GO" id="GO:0016758">
    <property type="term" value="F:hexosyltransferase activity"/>
    <property type="evidence" value="ECO:0000316"/>
    <property type="project" value="UniProtKB"/>
</dbReference>
<dbReference type="GO" id="GO:0009103">
    <property type="term" value="P:lipopolysaccharide biosynthetic process"/>
    <property type="evidence" value="ECO:0000316"/>
    <property type="project" value="UniProtKB"/>
</dbReference>
<dbReference type="GO" id="GO:0000271">
    <property type="term" value="P:polysaccharide biosynthetic process"/>
    <property type="evidence" value="ECO:0000316"/>
    <property type="project" value="UniProtKB"/>
</dbReference>
<dbReference type="CDD" id="cd04186">
    <property type="entry name" value="GT_2_like_c"/>
    <property type="match status" value="1"/>
</dbReference>
<dbReference type="Gene3D" id="3.90.550.10">
    <property type="entry name" value="Spore Coat Polysaccharide Biosynthesis Protein SpsA, Chain A"/>
    <property type="match status" value="1"/>
</dbReference>
<dbReference type="InterPro" id="IPR001173">
    <property type="entry name" value="Glyco_trans_2-like"/>
</dbReference>
<dbReference type="InterPro" id="IPR029044">
    <property type="entry name" value="Nucleotide-diphossugar_trans"/>
</dbReference>
<dbReference type="PANTHER" id="PTHR43179">
    <property type="entry name" value="RHAMNOSYLTRANSFERASE WBBL"/>
    <property type="match status" value="1"/>
</dbReference>
<dbReference type="PANTHER" id="PTHR43179:SF7">
    <property type="entry name" value="RHAMNOSYLTRANSFERASE WBBL"/>
    <property type="match status" value="1"/>
</dbReference>
<dbReference type="Pfam" id="PF00535">
    <property type="entry name" value="Glycos_transf_2"/>
    <property type="match status" value="1"/>
</dbReference>
<dbReference type="SUPFAM" id="SSF53448">
    <property type="entry name" value="Nucleotide-diphospho-sugar transferases"/>
    <property type="match status" value="1"/>
</dbReference>
<comment type="function">
    <text evidence="1">Rhamnosyltransferase involved in lipopolysaccharide biosynthesis.</text>
</comment>
<comment type="pathway">
    <text>Bacterial outer membrane biogenesis; lipopolysaccharide biosynthesis.</text>
</comment>
<comment type="similarity">
    <text evidence="2">Belongs to the glycosyltransferase 2 family.</text>
</comment>
<comment type="caution">
    <text evidence="2">PubMed:9097040, PubMed:9278503 and PubMed:16738553 sequences differ from that shown due to the presence of an IS5I insertion element between codons 148 and 149.</text>
</comment>
<accession>P36667</accession>
<accession>O07999</accession>
<accession>O08000</accession>
<accession>P76374</accession>
<accession>P94755</accession>
<name>WBBL_ECOLI</name>
<feature type="chain" id="PRO_0000059231" description="Rhamnosyltransferase WbbL">
    <location>
        <begin position="1"/>
        <end position="264"/>
    </location>
</feature>
<protein>
    <recommendedName>
        <fullName>Rhamnosyltransferase WbbL</fullName>
        <ecNumber>2.4.1.-</ecNumber>
    </recommendedName>
</protein>